<evidence type="ECO:0000250" key="1"/>
<evidence type="ECO:0000255" key="2">
    <source>
        <dbReference type="HAMAP-Rule" id="MF_00047"/>
    </source>
</evidence>
<sequence>MMRNVLLLCGGGSSEHEISLLSSEYLQQQLGLIENVNVLKVEIKNEGWFDQKERLVYLDIHTKSVKSDEFNESIHIDFIVPCIHGFPGETGDIQSLFELAGIPYLGCGPEASSNSFNKITSKLWYDAIGIPNTPYLFLTENNEESHQLSREAFDKWGKLFVKAARQGSSVGCYSVTKIEQLSDAIDKAFGFSHQVLVEKAVKPRELEVSAYEMNGQLHISKPGEIIAPDGAFYSYDEKYSAGSHSITEVEAKNLTEQQLATIQLCSEKVFRQMNLRHLSRIDFFLTSEGEIYLNEVNTFPGMTKISMFPKMLQHNGHKFHEFLADCIERSL</sequence>
<name>DDL_VIBVU</name>
<reference key="1">
    <citation type="submission" date="2002-12" db="EMBL/GenBank/DDBJ databases">
        <title>Complete genome sequence of Vibrio vulnificus CMCP6.</title>
        <authorList>
            <person name="Rhee J.H."/>
            <person name="Kim S.Y."/>
            <person name="Chung S.S."/>
            <person name="Kim J.J."/>
            <person name="Moon Y.H."/>
            <person name="Jeong H."/>
            <person name="Choy H.E."/>
        </authorList>
    </citation>
    <scope>NUCLEOTIDE SEQUENCE [LARGE SCALE GENOMIC DNA]</scope>
    <source>
        <strain>CMCP6</strain>
    </source>
</reference>
<gene>
    <name evidence="2" type="primary">ddl</name>
    <name type="ordered locus">VV2_0280</name>
</gene>
<dbReference type="EC" id="6.3.2.4" evidence="2"/>
<dbReference type="EMBL" id="AE016796">
    <property type="protein sequence ID" value="AAO07245.1"/>
    <property type="molecule type" value="Genomic_DNA"/>
</dbReference>
<dbReference type="RefSeq" id="WP_011081249.1">
    <property type="nucleotide sequence ID" value="NC_004460.2"/>
</dbReference>
<dbReference type="SMR" id="Q8D781"/>
<dbReference type="KEGG" id="vvu:VV2_0280"/>
<dbReference type="HOGENOM" id="CLU_039268_0_0_6"/>
<dbReference type="UniPathway" id="UPA00219"/>
<dbReference type="Proteomes" id="UP000002275">
    <property type="component" value="Chromosome 2"/>
</dbReference>
<dbReference type="GO" id="GO:0005829">
    <property type="term" value="C:cytosol"/>
    <property type="evidence" value="ECO:0007669"/>
    <property type="project" value="TreeGrafter"/>
</dbReference>
<dbReference type="GO" id="GO:0005524">
    <property type="term" value="F:ATP binding"/>
    <property type="evidence" value="ECO:0007669"/>
    <property type="project" value="UniProtKB-KW"/>
</dbReference>
<dbReference type="GO" id="GO:0008716">
    <property type="term" value="F:D-alanine-D-alanine ligase activity"/>
    <property type="evidence" value="ECO:0007669"/>
    <property type="project" value="UniProtKB-UniRule"/>
</dbReference>
<dbReference type="GO" id="GO:0046872">
    <property type="term" value="F:metal ion binding"/>
    <property type="evidence" value="ECO:0007669"/>
    <property type="project" value="UniProtKB-KW"/>
</dbReference>
<dbReference type="GO" id="GO:0071555">
    <property type="term" value="P:cell wall organization"/>
    <property type="evidence" value="ECO:0007669"/>
    <property type="project" value="UniProtKB-KW"/>
</dbReference>
<dbReference type="GO" id="GO:0009252">
    <property type="term" value="P:peptidoglycan biosynthetic process"/>
    <property type="evidence" value="ECO:0007669"/>
    <property type="project" value="UniProtKB-UniRule"/>
</dbReference>
<dbReference type="GO" id="GO:0008360">
    <property type="term" value="P:regulation of cell shape"/>
    <property type="evidence" value="ECO:0007669"/>
    <property type="project" value="UniProtKB-KW"/>
</dbReference>
<dbReference type="Gene3D" id="3.40.50.20">
    <property type="match status" value="1"/>
</dbReference>
<dbReference type="Gene3D" id="3.30.1490.20">
    <property type="entry name" value="ATP-grasp fold, A domain"/>
    <property type="match status" value="1"/>
</dbReference>
<dbReference type="Gene3D" id="3.30.470.20">
    <property type="entry name" value="ATP-grasp fold, B domain"/>
    <property type="match status" value="1"/>
</dbReference>
<dbReference type="HAMAP" id="MF_00047">
    <property type="entry name" value="Dala_Dala_lig"/>
    <property type="match status" value="1"/>
</dbReference>
<dbReference type="InterPro" id="IPR011761">
    <property type="entry name" value="ATP-grasp"/>
</dbReference>
<dbReference type="InterPro" id="IPR013815">
    <property type="entry name" value="ATP_grasp_subdomain_1"/>
</dbReference>
<dbReference type="InterPro" id="IPR000291">
    <property type="entry name" value="D-Ala_lig_Van_CS"/>
</dbReference>
<dbReference type="InterPro" id="IPR005905">
    <property type="entry name" value="D_ala_D_ala"/>
</dbReference>
<dbReference type="InterPro" id="IPR011095">
    <property type="entry name" value="Dala_Dala_lig_C"/>
</dbReference>
<dbReference type="InterPro" id="IPR011127">
    <property type="entry name" value="Dala_Dala_lig_N"/>
</dbReference>
<dbReference type="InterPro" id="IPR016185">
    <property type="entry name" value="PreATP-grasp_dom_sf"/>
</dbReference>
<dbReference type="NCBIfam" id="TIGR01205">
    <property type="entry name" value="D_ala_D_alaTIGR"/>
    <property type="match status" value="1"/>
</dbReference>
<dbReference type="NCBIfam" id="NF002527">
    <property type="entry name" value="PRK01966.1-3"/>
    <property type="match status" value="1"/>
</dbReference>
<dbReference type="PANTHER" id="PTHR23132">
    <property type="entry name" value="D-ALANINE--D-ALANINE LIGASE"/>
    <property type="match status" value="1"/>
</dbReference>
<dbReference type="PANTHER" id="PTHR23132:SF25">
    <property type="entry name" value="D-ALANINE--D-ALANINE LIGASE A"/>
    <property type="match status" value="1"/>
</dbReference>
<dbReference type="Pfam" id="PF07478">
    <property type="entry name" value="Dala_Dala_lig_C"/>
    <property type="match status" value="1"/>
</dbReference>
<dbReference type="Pfam" id="PF01820">
    <property type="entry name" value="Dala_Dala_lig_N"/>
    <property type="match status" value="1"/>
</dbReference>
<dbReference type="PIRSF" id="PIRSF039102">
    <property type="entry name" value="Ddl/VanB"/>
    <property type="match status" value="1"/>
</dbReference>
<dbReference type="SUPFAM" id="SSF56059">
    <property type="entry name" value="Glutathione synthetase ATP-binding domain-like"/>
    <property type="match status" value="1"/>
</dbReference>
<dbReference type="SUPFAM" id="SSF52440">
    <property type="entry name" value="PreATP-grasp domain"/>
    <property type="match status" value="1"/>
</dbReference>
<dbReference type="PROSITE" id="PS50975">
    <property type="entry name" value="ATP_GRASP"/>
    <property type="match status" value="1"/>
</dbReference>
<dbReference type="PROSITE" id="PS00843">
    <property type="entry name" value="DALA_DALA_LIGASE_1"/>
    <property type="match status" value="1"/>
</dbReference>
<dbReference type="PROSITE" id="PS00844">
    <property type="entry name" value="DALA_DALA_LIGASE_2"/>
    <property type="match status" value="1"/>
</dbReference>
<protein>
    <recommendedName>
        <fullName evidence="2">D-alanine--D-alanine ligase</fullName>
        <ecNumber evidence="2">6.3.2.4</ecNumber>
    </recommendedName>
    <alternativeName>
        <fullName evidence="2">D-Ala-D-Ala ligase</fullName>
    </alternativeName>
    <alternativeName>
        <fullName evidence="2">D-alanylalanine synthetase</fullName>
    </alternativeName>
</protein>
<keyword id="KW-0067">ATP-binding</keyword>
<keyword id="KW-0133">Cell shape</keyword>
<keyword id="KW-0961">Cell wall biogenesis/degradation</keyword>
<keyword id="KW-0963">Cytoplasm</keyword>
<keyword id="KW-0436">Ligase</keyword>
<keyword id="KW-0460">Magnesium</keyword>
<keyword id="KW-0464">Manganese</keyword>
<keyword id="KW-0479">Metal-binding</keyword>
<keyword id="KW-0547">Nucleotide-binding</keyword>
<keyword id="KW-0573">Peptidoglycan synthesis</keyword>
<organism>
    <name type="scientific">Vibrio vulnificus (strain CMCP6)</name>
    <dbReference type="NCBI Taxonomy" id="216895"/>
    <lineage>
        <taxon>Bacteria</taxon>
        <taxon>Pseudomonadati</taxon>
        <taxon>Pseudomonadota</taxon>
        <taxon>Gammaproteobacteria</taxon>
        <taxon>Vibrionales</taxon>
        <taxon>Vibrionaceae</taxon>
        <taxon>Vibrio</taxon>
    </lineage>
</organism>
<comment type="function">
    <text evidence="2">Cell wall formation.</text>
</comment>
<comment type="catalytic activity">
    <reaction evidence="2">
        <text>2 D-alanine + ATP = D-alanyl-D-alanine + ADP + phosphate + H(+)</text>
        <dbReference type="Rhea" id="RHEA:11224"/>
        <dbReference type="ChEBI" id="CHEBI:15378"/>
        <dbReference type="ChEBI" id="CHEBI:30616"/>
        <dbReference type="ChEBI" id="CHEBI:43474"/>
        <dbReference type="ChEBI" id="CHEBI:57416"/>
        <dbReference type="ChEBI" id="CHEBI:57822"/>
        <dbReference type="ChEBI" id="CHEBI:456216"/>
        <dbReference type="EC" id="6.3.2.4"/>
    </reaction>
</comment>
<comment type="cofactor">
    <cofactor evidence="1">
        <name>Mg(2+)</name>
        <dbReference type="ChEBI" id="CHEBI:18420"/>
    </cofactor>
    <cofactor evidence="1">
        <name>Mn(2+)</name>
        <dbReference type="ChEBI" id="CHEBI:29035"/>
    </cofactor>
    <text evidence="1">Binds 2 magnesium or manganese ions per subunit.</text>
</comment>
<comment type="pathway">
    <text evidence="2">Cell wall biogenesis; peptidoglycan biosynthesis.</text>
</comment>
<comment type="subcellular location">
    <subcellularLocation>
        <location evidence="2">Cytoplasm</location>
    </subcellularLocation>
</comment>
<comment type="similarity">
    <text evidence="2">Belongs to the D-alanine--D-alanine ligase family.</text>
</comment>
<accession>Q8D781</accession>
<feature type="chain" id="PRO_0000177903" description="D-alanine--D-alanine ligase">
    <location>
        <begin position="1"/>
        <end position="331"/>
    </location>
</feature>
<feature type="domain" description="ATP-grasp" evidence="2">
    <location>
        <begin position="122"/>
        <end position="328"/>
    </location>
</feature>
<feature type="binding site" evidence="2">
    <location>
        <begin position="152"/>
        <end position="207"/>
    </location>
    <ligand>
        <name>ATP</name>
        <dbReference type="ChEBI" id="CHEBI:30616"/>
    </ligand>
</feature>
<feature type="binding site" evidence="2">
    <location>
        <position position="282"/>
    </location>
    <ligand>
        <name>Mg(2+)</name>
        <dbReference type="ChEBI" id="CHEBI:18420"/>
        <label>1</label>
    </ligand>
</feature>
<feature type="binding site" evidence="2">
    <location>
        <position position="295"/>
    </location>
    <ligand>
        <name>Mg(2+)</name>
        <dbReference type="ChEBI" id="CHEBI:18420"/>
        <label>1</label>
    </ligand>
</feature>
<feature type="binding site" evidence="2">
    <location>
        <position position="295"/>
    </location>
    <ligand>
        <name>Mg(2+)</name>
        <dbReference type="ChEBI" id="CHEBI:18420"/>
        <label>2</label>
    </ligand>
</feature>
<feature type="binding site" evidence="2">
    <location>
        <position position="297"/>
    </location>
    <ligand>
        <name>Mg(2+)</name>
        <dbReference type="ChEBI" id="CHEBI:18420"/>
        <label>2</label>
    </ligand>
</feature>
<proteinExistence type="inferred from homology"/>